<sequence>MVRILAVIPARYASERLPGKVLLPIAGRPMLQWVYEATIASNVFDQVAIATEDPRVVEAAAAFGAEAILTSADLASGTDRVAEASLHFPDCKVIANVQGDQPFVTPGLLQALVSPYRAGELPEMTTVGGPYDPAQDADDPNTVKVVCDQRGNALYFSRSAIPYPRTVVHDLPVYHHFGLYAFRRDFLAQYRQLPPTPLERCESLEQLRVLEQGYRIRVVPCADKVIEVNTADDLERANAWASQR</sequence>
<accession>Q31KU9</accession>
<evidence type="ECO:0000255" key="1">
    <source>
        <dbReference type="HAMAP-Rule" id="MF_00057"/>
    </source>
</evidence>
<comment type="function">
    <text evidence="1">Activates KDO (a required 8-carbon sugar) for incorporation into bacterial lipopolysaccharide in Gram-negative bacteria.</text>
</comment>
<comment type="catalytic activity">
    <reaction evidence="1">
        <text>3-deoxy-alpha-D-manno-oct-2-ulosonate + CTP = CMP-3-deoxy-beta-D-manno-octulosonate + diphosphate</text>
        <dbReference type="Rhea" id="RHEA:23448"/>
        <dbReference type="ChEBI" id="CHEBI:33019"/>
        <dbReference type="ChEBI" id="CHEBI:37563"/>
        <dbReference type="ChEBI" id="CHEBI:85986"/>
        <dbReference type="ChEBI" id="CHEBI:85987"/>
        <dbReference type="EC" id="2.7.7.38"/>
    </reaction>
</comment>
<comment type="pathway">
    <text evidence="1">Nucleotide-sugar biosynthesis; CMP-3-deoxy-D-manno-octulosonate biosynthesis; CMP-3-deoxy-D-manno-octulosonate from 3-deoxy-D-manno-octulosonate and CTP: step 1/1.</text>
</comment>
<comment type="pathway">
    <text evidence="1">Bacterial outer membrane biogenesis; lipopolysaccharide biosynthesis.</text>
</comment>
<comment type="subcellular location">
    <subcellularLocation>
        <location evidence="1">Cytoplasm</location>
    </subcellularLocation>
</comment>
<comment type="similarity">
    <text evidence="1">Belongs to the KdsB family.</text>
</comment>
<gene>
    <name evidence="1" type="primary">kdsB</name>
    <name type="ordered locus">Synpcc7942_2290</name>
</gene>
<dbReference type="EC" id="2.7.7.38" evidence="1"/>
<dbReference type="EMBL" id="CP000100">
    <property type="protein sequence ID" value="ABB58320.1"/>
    <property type="molecule type" value="Genomic_DNA"/>
</dbReference>
<dbReference type="RefSeq" id="WP_011244120.1">
    <property type="nucleotide sequence ID" value="NZ_JACJTX010000001.1"/>
</dbReference>
<dbReference type="SMR" id="Q31KU9"/>
<dbReference type="STRING" id="1140.Synpcc7942_2290"/>
<dbReference type="PaxDb" id="1140-Synpcc7942_2290"/>
<dbReference type="GeneID" id="72431176"/>
<dbReference type="KEGG" id="syf:Synpcc7942_2290"/>
<dbReference type="eggNOG" id="COG1212">
    <property type="taxonomic scope" value="Bacteria"/>
</dbReference>
<dbReference type="HOGENOM" id="CLU_065038_0_1_3"/>
<dbReference type="OrthoDB" id="9815559at2"/>
<dbReference type="BioCyc" id="SYNEL:SYNPCC7942_2290-MONOMER"/>
<dbReference type="UniPathway" id="UPA00030"/>
<dbReference type="UniPathway" id="UPA00358">
    <property type="reaction ID" value="UER00476"/>
</dbReference>
<dbReference type="Proteomes" id="UP000889800">
    <property type="component" value="Chromosome"/>
</dbReference>
<dbReference type="GO" id="GO:0005829">
    <property type="term" value="C:cytosol"/>
    <property type="evidence" value="ECO:0007669"/>
    <property type="project" value="TreeGrafter"/>
</dbReference>
<dbReference type="GO" id="GO:0008690">
    <property type="term" value="F:3-deoxy-manno-octulosonate cytidylyltransferase activity"/>
    <property type="evidence" value="ECO:0007669"/>
    <property type="project" value="UniProtKB-UniRule"/>
</dbReference>
<dbReference type="GO" id="GO:0033468">
    <property type="term" value="P:CMP-keto-3-deoxy-D-manno-octulosonic acid biosynthetic process"/>
    <property type="evidence" value="ECO:0007669"/>
    <property type="project" value="UniProtKB-UniRule"/>
</dbReference>
<dbReference type="GO" id="GO:0009103">
    <property type="term" value="P:lipopolysaccharide biosynthetic process"/>
    <property type="evidence" value="ECO:0007669"/>
    <property type="project" value="UniProtKB-UniRule"/>
</dbReference>
<dbReference type="CDD" id="cd02517">
    <property type="entry name" value="CMP-KDO-Synthetase"/>
    <property type="match status" value="1"/>
</dbReference>
<dbReference type="Gene3D" id="3.90.550.10">
    <property type="entry name" value="Spore Coat Polysaccharide Biosynthesis Protein SpsA, Chain A"/>
    <property type="match status" value="1"/>
</dbReference>
<dbReference type="HAMAP" id="MF_00057">
    <property type="entry name" value="KdsB"/>
    <property type="match status" value="1"/>
</dbReference>
<dbReference type="InterPro" id="IPR003329">
    <property type="entry name" value="Cytidylyl_trans"/>
</dbReference>
<dbReference type="InterPro" id="IPR004528">
    <property type="entry name" value="KdsB"/>
</dbReference>
<dbReference type="InterPro" id="IPR029044">
    <property type="entry name" value="Nucleotide-diphossugar_trans"/>
</dbReference>
<dbReference type="NCBIfam" id="TIGR00466">
    <property type="entry name" value="kdsB"/>
    <property type="match status" value="1"/>
</dbReference>
<dbReference type="NCBIfam" id="NF003950">
    <property type="entry name" value="PRK05450.1-3"/>
    <property type="match status" value="1"/>
</dbReference>
<dbReference type="NCBIfam" id="NF003952">
    <property type="entry name" value="PRK05450.1-5"/>
    <property type="match status" value="1"/>
</dbReference>
<dbReference type="NCBIfam" id="NF009905">
    <property type="entry name" value="PRK13368.1"/>
    <property type="match status" value="1"/>
</dbReference>
<dbReference type="PANTHER" id="PTHR42866">
    <property type="entry name" value="3-DEOXY-MANNO-OCTULOSONATE CYTIDYLYLTRANSFERASE"/>
    <property type="match status" value="1"/>
</dbReference>
<dbReference type="PANTHER" id="PTHR42866:SF2">
    <property type="entry name" value="3-DEOXY-MANNO-OCTULOSONATE CYTIDYLYLTRANSFERASE, MITOCHONDRIAL"/>
    <property type="match status" value="1"/>
</dbReference>
<dbReference type="Pfam" id="PF02348">
    <property type="entry name" value="CTP_transf_3"/>
    <property type="match status" value="1"/>
</dbReference>
<dbReference type="SUPFAM" id="SSF53448">
    <property type="entry name" value="Nucleotide-diphospho-sugar transferases"/>
    <property type="match status" value="1"/>
</dbReference>
<feature type="chain" id="PRO_1000116895" description="3-deoxy-manno-octulosonate cytidylyltransferase">
    <location>
        <begin position="1"/>
        <end position="244"/>
    </location>
</feature>
<protein>
    <recommendedName>
        <fullName evidence="1">3-deoxy-manno-octulosonate cytidylyltransferase</fullName>
        <ecNumber evidence="1">2.7.7.38</ecNumber>
    </recommendedName>
    <alternativeName>
        <fullName evidence="1">CMP-2-keto-3-deoxyoctulosonic acid synthase</fullName>
        <shortName evidence="1">CKS</shortName>
        <shortName evidence="1">CMP-KDO synthase</shortName>
    </alternativeName>
</protein>
<proteinExistence type="inferred from homology"/>
<organism>
    <name type="scientific">Synechococcus elongatus (strain ATCC 33912 / PCC 7942 / FACHB-805)</name>
    <name type="common">Anacystis nidulans R2</name>
    <dbReference type="NCBI Taxonomy" id="1140"/>
    <lineage>
        <taxon>Bacteria</taxon>
        <taxon>Bacillati</taxon>
        <taxon>Cyanobacteriota</taxon>
        <taxon>Cyanophyceae</taxon>
        <taxon>Synechococcales</taxon>
        <taxon>Synechococcaceae</taxon>
        <taxon>Synechococcus</taxon>
    </lineage>
</organism>
<name>KDSB_SYNE7</name>
<reference key="1">
    <citation type="submission" date="2005-08" db="EMBL/GenBank/DDBJ databases">
        <title>Complete sequence of chromosome 1 of Synechococcus elongatus PCC 7942.</title>
        <authorList>
            <consortium name="US DOE Joint Genome Institute"/>
            <person name="Copeland A."/>
            <person name="Lucas S."/>
            <person name="Lapidus A."/>
            <person name="Barry K."/>
            <person name="Detter J.C."/>
            <person name="Glavina T."/>
            <person name="Hammon N."/>
            <person name="Israni S."/>
            <person name="Pitluck S."/>
            <person name="Schmutz J."/>
            <person name="Larimer F."/>
            <person name="Land M."/>
            <person name="Kyrpides N."/>
            <person name="Lykidis A."/>
            <person name="Golden S."/>
            <person name="Richardson P."/>
        </authorList>
    </citation>
    <scope>NUCLEOTIDE SEQUENCE [LARGE SCALE GENOMIC DNA]</scope>
    <source>
        <strain>ATCC 33912 / PCC 7942 / FACHB-805</strain>
    </source>
</reference>
<keyword id="KW-0963">Cytoplasm</keyword>
<keyword id="KW-0448">Lipopolysaccharide biosynthesis</keyword>
<keyword id="KW-0548">Nucleotidyltransferase</keyword>
<keyword id="KW-1185">Reference proteome</keyword>
<keyword id="KW-0808">Transferase</keyword>